<reference key="1">
    <citation type="journal article" date="2004" name="Science">
        <title>The Ashbya gossypii genome as a tool for mapping the ancient Saccharomyces cerevisiae genome.</title>
        <authorList>
            <person name="Dietrich F.S."/>
            <person name="Voegeli S."/>
            <person name="Brachat S."/>
            <person name="Lerch A."/>
            <person name="Gates K."/>
            <person name="Steiner S."/>
            <person name="Mohr C."/>
            <person name="Poehlmann R."/>
            <person name="Luedi P."/>
            <person name="Choi S."/>
            <person name="Wing R.A."/>
            <person name="Flavier A."/>
            <person name="Gaffney T.D."/>
            <person name="Philippsen P."/>
        </authorList>
    </citation>
    <scope>NUCLEOTIDE SEQUENCE [LARGE SCALE GENOMIC DNA]</scope>
    <source>
        <strain>ATCC 10895 / CBS 109.51 / FGSC 9923 / NRRL Y-1056</strain>
    </source>
</reference>
<reference key="2">
    <citation type="journal article" date="2013" name="G3 (Bethesda)">
        <title>Genomes of Ashbya fungi isolated from insects reveal four mating-type loci, numerous translocations, lack of transposons, and distinct gene duplications.</title>
        <authorList>
            <person name="Dietrich F.S."/>
            <person name="Voegeli S."/>
            <person name="Kuo S."/>
            <person name="Philippsen P."/>
        </authorList>
    </citation>
    <scope>GENOME REANNOTATION</scope>
    <source>
        <strain>ATCC 10895 / CBS 109.51 / FGSC 9923 / NRRL Y-1056</strain>
    </source>
</reference>
<gene>
    <name type="primary">DBP6</name>
    <name type="ordered locus">AGL225C</name>
</gene>
<dbReference type="EC" id="3.6.4.13"/>
<dbReference type="EMBL" id="AE016820">
    <property type="protein sequence ID" value="AAS54266.1"/>
    <property type="molecule type" value="Genomic_DNA"/>
</dbReference>
<dbReference type="RefSeq" id="NP_986442.1">
    <property type="nucleotide sequence ID" value="NM_211504.1"/>
</dbReference>
<dbReference type="SMR" id="Q751D1"/>
<dbReference type="FunCoup" id="Q751D1">
    <property type="interactions" value="915"/>
</dbReference>
<dbReference type="STRING" id="284811.Q751D1"/>
<dbReference type="EnsemblFungi" id="AAS54266">
    <property type="protein sequence ID" value="AAS54266"/>
    <property type="gene ID" value="AGOS_AGL225C"/>
</dbReference>
<dbReference type="GeneID" id="4622735"/>
<dbReference type="KEGG" id="ago:AGOS_AGL225C"/>
<dbReference type="eggNOG" id="KOG0350">
    <property type="taxonomic scope" value="Eukaryota"/>
</dbReference>
<dbReference type="HOGENOM" id="CLU_003041_15_2_1"/>
<dbReference type="InParanoid" id="Q751D1"/>
<dbReference type="OMA" id="HLEWLVI"/>
<dbReference type="OrthoDB" id="3370at2759"/>
<dbReference type="Proteomes" id="UP000000591">
    <property type="component" value="Chromosome VII"/>
</dbReference>
<dbReference type="GO" id="GO:0005730">
    <property type="term" value="C:nucleolus"/>
    <property type="evidence" value="ECO:0007669"/>
    <property type="project" value="UniProtKB-SubCell"/>
</dbReference>
<dbReference type="GO" id="GO:0005634">
    <property type="term" value="C:nucleus"/>
    <property type="evidence" value="ECO:0000318"/>
    <property type="project" value="GO_Central"/>
</dbReference>
<dbReference type="GO" id="GO:0030687">
    <property type="term" value="C:preribosome, large subunit precursor"/>
    <property type="evidence" value="ECO:0007669"/>
    <property type="project" value="EnsemblFungi"/>
</dbReference>
<dbReference type="GO" id="GO:0005524">
    <property type="term" value="F:ATP binding"/>
    <property type="evidence" value="ECO:0007669"/>
    <property type="project" value="UniProtKB-KW"/>
</dbReference>
<dbReference type="GO" id="GO:0016887">
    <property type="term" value="F:ATP hydrolysis activity"/>
    <property type="evidence" value="ECO:0007669"/>
    <property type="project" value="RHEA"/>
</dbReference>
<dbReference type="GO" id="GO:0003723">
    <property type="term" value="F:RNA binding"/>
    <property type="evidence" value="ECO:0007669"/>
    <property type="project" value="UniProtKB-KW"/>
</dbReference>
<dbReference type="GO" id="GO:0003724">
    <property type="term" value="F:RNA helicase activity"/>
    <property type="evidence" value="ECO:0007669"/>
    <property type="project" value="UniProtKB-EC"/>
</dbReference>
<dbReference type="GO" id="GO:0000466">
    <property type="term" value="P:maturation of 5.8S rRNA from tricistronic rRNA transcript (SSU-rRNA, 5.8S rRNA, LSU-rRNA)"/>
    <property type="evidence" value="ECO:0007669"/>
    <property type="project" value="EnsemblFungi"/>
</dbReference>
<dbReference type="GO" id="GO:0000463">
    <property type="term" value="P:maturation of LSU-rRNA from tricistronic rRNA transcript (SSU-rRNA, 5.8S rRNA, LSU-rRNA)"/>
    <property type="evidence" value="ECO:0007669"/>
    <property type="project" value="EnsemblFungi"/>
</dbReference>
<dbReference type="CDD" id="cd17956">
    <property type="entry name" value="DEADc_DDX51"/>
    <property type="match status" value="1"/>
</dbReference>
<dbReference type="CDD" id="cd18787">
    <property type="entry name" value="SF2_C_DEAD"/>
    <property type="match status" value="1"/>
</dbReference>
<dbReference type="Gene3D" id="3.40.50.300">
    <property type="entry name" value="P-loop containing nucleotide triphosphate hydrolases"/>
    <property type="match status" value="2"/>
</dbReference>
<dbReference type="InterPro" id="IPR011545">
    <property type="entry name" value="DEAD/DEAH_box_helicase_dom"/>
</dbReference>
<dbReference type="InterPro" id="IPR014001">
    <property type="entry name" value="Helicase_ATP-bd"/>
</dbReference>
<dbReference type="InterPro" id="IPR001650">
    <property type="entry name" value="Helicase_C-like"/>
</dbReference>
<dbReference type="InterPro" id="IPR027417">
    <property type="entry name" value="P-loop_NTPase"/>
</dbReference>
<dbReference type="InterPro" id="IPR000629">
    <property type="entry name" value="RNA-helicase_DEAD-box_CS"/>
</dbReference>
<dbReference type="PANTHER" id="PTHR24031">
    <property type="entry name" value="RNA HELICASE"/>
    <property type="match status" value="1"/>
</dbReference>
<dbReference type="Pfam" id="PF00270">
    <property type="entry name" value="DEAD"/>
    <property type="match status" value="1"/>
</dbReference>
<dbReference type="Pfam" id="PF00271">
    <property type="entry name" value="Helicase_C"/>
    <property type="match status" value="1"/>
</dbReference>
<dbReference type="SMART" id="SM00487">
    <property type="entry name" value="DEXDc"/>
    <property type="match status" value="1"/>
</dbReference>
<dbReference type="SMART" id="SM00490">
    <property type="entry name" value="HELICc"/>
    <property type="match status" value="1"/>
</dbReference>
<dbReference type="SUPFAM" id="SSF52540">
    <property type="entry name" value="P-loop containing nucleoside triphosphate hydrolases"/>
    <property type="match status" value="1"/>
</dbReference>
<dbReference type="PROSITE" id="PS00039">
    <property type="entry name" value="DEAD_ATP_HELICASE"/>
    <property type="match status" value="1"/>
</dbReference>
<dbReference type="PROSITE" id="PS51192">
    <property type="entry name" value="HELICASE_ATP_BIND_1"/>
    <property type="match status" value="1"/>
</dbReference>
<dbReference type="PROSITE" id="PS51194">
    <property type="entry name" value="HELICASE_CTER"/>
    <property type="match status" value="1"/>
</dbReference>
<organism>
    <name type="scientific">Eremothecium gossypii (strain ATCC 10895 / CBS 109.51 / FGSC 9923 / NRRL Y-1056)</name>
    <name type="common">Yeast</name>
    <name type="synonym">Ashbya gossypii</name>
    <dbReference type="NCBI Taxonomy" id="284811"/>
    <lineage>
        <taxon>Eukaryota</taxon>
        <taxon>Fungi</taxon>
        <taxon>Dikarya</taxon>
        <taxon>Ascomycota</taxon>
        <taxon>Saccharomycotina</taxon>
        <taxon>Saccharomycetes</taxon>
        <taxon>Saccharomycetales</taxon>
        <taxon>Saccharomycetaceae</taxon>
        <taxon>Eremothecium</taxon>
    </lineage>
</organism>
<name>DBP6_EREGS</name>
<feature type="chain" id="PRO_0000227948" description="ATP-dependent RNA helicase DBP6">
    <location>
        <begin position="1"/>
        <end position="607"/>
    </location>
</feature>
<feature type="domain" description="Helicase ATP-binding" evidence="2">
    <location>
        <begin position="208"/>
        <end position="388"/>
    </location>
</feature>
<feature type="domain" description="Helicase C-terminal" evidence="3">
    <location>
        <begin position="419"/>
        <end position="578"/>
    </location>
</feature>
<feature type="region of interest" description="Disordered" evidence="4">
    <location>
        <begin position="1"/>
        <end position="83"/>
    </location>
</feature>
<feature type="short sequence motif" description="Q motif">
    <location>
        <begin position="184"/>
        <end position="192"/>
    </location>
</feature>
<feature type="short sequence motif" description="DEAD box">
    <location>
        <begin position="328"/>
        <end position="331"/>
    </location>
</feature>
<feature type="compositionally biased region" description="Acidic residues" evidence="4">
    <location>
        <begin position="34"/>
        <end position="59"/>
    </location>
</feature>
<feature type="compositionally biased region" description="Basic and acidic residues" evidence="4">
    <location>
        <begin position="60"/>
        <end position="69"/>
    </location>
</feature>
<feature type="binding site" evidence="2">
    <location>
        <begin position="221"/>
        <end position="228"/>
    </location>
    <ligand>
        <name>ATP</name>
        <dbReference type="ChEBI" id="CHEBI:30616"/>
    </ligand>
</feature>
<evidence type="ECO:0000250" key="1"/>
<evidence type="ECO:0000255" key="2">
    <source>
        <dbReference type="PROSITE-ProRule" id="PRU00541"/>
    </source>
</evidence>
<evidence type="ECO:0000255" key="3">
    <source>
        <dbReference type="PROSITE-ProRule" id="PRU00542"/>
    </source>
</evidence>
<evidence type="ECO:0000256" key="4">
    <source>
        <dbReference type="SAM" id="MobiDB-lite"/>
    </source>
</evidence>
<evidence type="ECO:0000305" key="5"/>
<proteinExistence type="inferred from homology"/>
<comment type="function">
    <text evidence="1">ATP-binding RNA helicase involved in the biogenesis of 60S ribosomal subunits and is required for the normal formation of 25S and 5.8S rRNAs.</text>
</comment>
<comment type="catalytic activity">
    <reaction>
        <text>ATP + H2O = ADP + phosphate + H(+)</text>
        <dbReference type="Rhea" id="RHEA:13065"/>
        <dbReference type="ChEBI" id="CHEBI:15377"/>
        <dbReference type="ChEBI" id="CHEBI:15378"/>
        <dbReference type="ChEBI" id="CHEBI:30616"/>
        <dbReference type="ChEBI" id="CHEBI:43474"/>
        <dbReference type="ChEBI" id="CHEBI:456216"/>
        <dbReference type="EC" id="3.6.4.13"/>
    </reaction>
</comment>
<comment type="subunit">
    <text evidence="1">Associated with pre-ribosomal particles.</text>
</comment>
<comment type="subcellular location">
    <subcellularLocation>
        <location evidence="1">Nucleus</location>
        <location evidence="1">Nucleolus</location>
    </subcellularLocation>
</comment>
<comment type="domain">
    <text>The Q motif is unique to and characteristic of the DEAD box family of RNA helicases and controls ATP binding and hydrolysis.</text>
</comment>
<comment type="similarity">
    <text evidence="5">Belongs to the DEAD box helicase family. DDX51/DBP6 subfamily.</text>
</comment>
<protein>
    <recommendedName>
        <fullName>ATP-dependent RNA helicase DBP6</fullName>
        <ecNumber>3.6.4.13</ecNumber>
    </recommendedName>
</protein>
<sequence>MFAARFDPSRHYEEGDTAPPAPSLPMKRSRDAQQDESESEMSSAESEDEAMQLDDEEEVVDSKGKENHGSDSIGTGEADKRHQSVLSRFQRTISVQDKLDSDAIVGSDSEEEPAKMHGLVPIAQPAIVRDTLAQDSRKERKLLAWSNTTKIHYDSTMTKPFAAYKDILSTSLLANVEGGFSRTAFPIQTALLDSVLPLMSQAYSVSKRYYTRKVGDILVNASTGSGKTLAYAMLLIHILSRRTVNKLRAVILVPTKLLVHQVYDTVQALAKGSSVVVAVSKMDTSLKEESAKLKAQEPDVLIITPGRLVDHLNMQTFSLKNLKFLVLDEADRLLNQSFQNWCIELMTRLNAERPFKGPGNVIKMIFSATLTTNTERLHDLQLHNPKLFLMGSQLYHMPAQLQEYNLPIPTSKSYAKPLILLRLLPLLSTESLRILVFVKSNEASIRLAALLTAMVGNGLSAVSTTVGSINNNNSKATNRKLIEAFAAGASGHCSILVSTDLMSRGLDISGISHVINYDLPISSQQYVHRCGRTARANTSGTAVNLLVGKGEQNFWKDHIDSDISRAPDGSHLFFDEEQREQLVSLSEEDTATYKKCLEELKKSVLGR</sequence>
<accession>Q751D1</accession>
<keyword id="KW-0067">ATP-binding</keyword>
<keyword id="KW-0347">Helicase</keyword>
<keyword id="KW-0378">Hydrolase</keyword>
<keyword id="KW-0547">Nucleotide-binding</keyword>
<keyword id="KW-0539">Nucleus</keyword>
<keyword id="KW-1185">Reference proteome</keyword>
<keyword id="KW-0690">Ribosome biogenesis</keyword>
<keyword id="KW-0694">RNA-binding</keyword>
<keyword id="KW-0698">rRNA processing</keyword>